<feature type="chain" id="PRO_0000086602" description="Negative regulator of sexual conjugation and meiosis">
    <location>
        <begin position="1"/>
        <end position="470"/>
    </location>
</feature>
<feature type="domain" description="Protein kinase" evidence="1">
    <location>
        <begin position="18"/>
        <end position="295"/>
    </location>
</feature>
<feature type="active site" description="Proton acceptor" evidence="1 2">
    <location>
        <position position="143"/>
    </location>
</feature>
<feature type="binding site" evidence="1">
    <location>
        <begin position="24"/>
        <end position="32"/>
    </location>
    <ligand>
        <name>ATP</name>
        <dbReference type="ChEBI" id="CHEBI:30616"/>
    </ligand>
</feature>
<feature type="binding site" evidence="1">
    <location>
        <position position="47"/>
    </location>
    <ligand>
        <name>ATP</name>
        <dbReference type="ChEBI" id="CHEBI:30616"/>
    </ligand>
</feature>
<feature type="modified residue" description="Phosphoserine" evidence="3">
    <location>
        <position position="469"/>
    </location>
</feature>
<feature type="sequence conflict" description="In Ref. 1; CAA28437." evidence="4" ref="1">
    <original>V</original>
    <variation>G</variation>
    <location>
        <position position="155"/>
    </location>
</feature>
<keyword id="KW-0067">ATP-binding</keyword>
<keyword id="KW-0184">Conjugation</keyword>
<keyword id="KW-0418">Kinase</keyword>
<keyword id="KW-0469">Meiosis</keyword>
<keyword id="KW-0547">Nucleotide-binding</keyword>
<keyword id="KW-0597">Phosphoprotein</keyword>
<keyword id="KW-1185">Reference proteome</keyword>
<keyword id="KW-0723">Serine/threonine-protein kinase</keyword>
<keyword id="KW-0808">Transferase</keyword>
<accession>P08092</accession>
<accession>Q9UUD5</accession>
<name>RAN1_SCHPO</name>
<comment type="function">
    <text>This protein is a negative regulator of both sexual conjugation and meiosis. It phosphorylates mei2. It blocks the onset of meiosis until conjugation takes place.</text>
</comment>
<comment type="catalytic activity">
    <reaction>
        <text>L-seryl-[protein] + ATP = O-phospho-L-seryl-[protein] + ADP + H(+)</text>
        <dbReference type="Rhea" id="RHEA:17989"/>
        <dbReference type="Rhea" id="RHEA-COMP:9863"/>
        <dbReference type="Rhea" id="RHEA-COMP:11604"/>
        <dbReference type="ChEBI" id="CHEBI:15378"/>
        <dbReference type="ChEBI" id="CHEBI:29999"/>
        <dbReference type="ChEBI" id="CHEBI:30616"/>
        <dbReference type="ChEBI" id="CHEBI:83421"/>
        <dbReference type="ChEBI" id="CHEBI:456216"/>
        <dbReference type="EC" id="2.7.11.1"/>
    </reaction>
</comment>
<comment type="catalytic activity">
    <reaction>
        <text>L-threonyl-[protein] + ATP = O-phospho-L-threonyl-[protein] + ADP + H(+)</text>
        <dbReference type="Rhea" id="RHEA:46608"/>
        <dbReference type="Rhea" id="RHEA-COMP:11060"/>
        <dbReference type="Rhea" id="RHEA-COMP:11605"/>
        <dbReference type="ChEBI" id="CHEBI:15378"/>
        <dbReference type="ChEBI" id="CHEBI:30013"/>
        <dbReference type="ChEBI" id="CHEBI:30616"/>
        <dbReference type="ChEBI" id="CHEBI:61977"/>
        <dbReference type="ChEBI" id="CHEBI:456216"/>
        <dbReference type="EC" id="2.7.11.1"/>
    </reaction>
</comment>
<comment type="similarity">
    <text evidence="1">Belongs to the protein kinase superfamily. Ser/Thr protein kinase family.</text>
</comment>
<gene>
    <name type="primary">ran1</name>
    <name type="synonym">pat1</name>
    <name type="ORF">SPBC19C2.05</name>
</gene>
<sequence length="470" mass="52212">MMRENPELLLGQVLGDSLRFVSIIGAGAYGVVYKAEDIYDGTLYAVKALCKDGLNEKQKKLQARELALHARVSSHPYIITLHRVLETEDAIYVVLQYCPNGDLFTYITEKKVYQGNSHLIKTVFLQLISAVEHCHSVGIYHRDLKPENIMVGNDVNTVYLADFGLATTEPYSSDFGCGSLFYMSPECQREVKKLSSLSDMLPVTPEPIESQSSSFATAPNDVWALGIILINLCCKRNPWKRACSQTDGTYRSYVHNPSTLLSILPISRELNSLLNRIFDRNPKTRITLPELSTLVSNCKNLTRRLRPAPLVSSRYLAYQQQQQQQQMNLQQGIQGYPHQGYMPTQNIGFPWPPTPQFVSNWNHCATPTIPVSLQVLTPNSSLKVDPTTPLTAPIHATESFWPSAAAAAAAVHNNANSYMPITPTPYPNNAKIFGYPNQPPLTPIPFTGFVLHPAPVGRAADAVDPSRKSL</sequence>
<dbReference type="EC" id="2.7.11.1"/>
<dbReference type="EMBL" id="X04728">
    <property type="protein sequence ID" value="CAA28437.1"/>
    <property type="molecule type" value="Genomic_DNA"/>
</dbReference>
<dbReference type="EMBL" id="CU329671">
    <property type="protein sequence ID" value="CAB52032.1"/>
    <property type="molecule type" value="Genomic_DNA"/>
</dbReference>
<dbReference type="PIR" id="A25685">
    <property type="entry name" value="A25685"/>
</dbReference>
<dbReference type="PIR" id="T39796">
    <property type="entry name" value="T39796"/>
</dbReference>
<dbReference type="RefSeq" id="NP_595690.1">
    <property type="nucleotide sequence ID" value="NM_001021587.2"/>
</dbReference>
<dbReference type="SMR" id="P08092"/>
<dbReference type="BioGRID" id="277106">
    <property type="interactions" value="75"/>
</dbReference>
<dbReference type="DIP" id="DIP-10N"/>
<dbReference type="FunCoup" id="P08092">
    <property type="interactions" value="346"/>
</dbReference>
<dbReference type="IntAct" id="P08092">
    <property type="interactions" value="4"/>
</dbReference>
<dbReference type="STRING" id="284812.P08092"/>
<dbReference type="iPTMnet" id="P08092"/>
<dbReference type="PaxDb" id="4896-SPBC19C2.05.1"/>
<dbReference type="EnsemblFungi" id="SPBC19C2.05.1">
    <property type="protein sequence ID" value="SPBC19C2.05.1:pep"/>
    <property type="gene ID" value="SPBC19C2.05"/>
</dbReference>
<dbReference type="GeneID" id="2540580"/>
<dbReference type="KEGG" id="spo:2540580"/>
<dbReference type="PomBase" id="SPBC19C2.05">
    <property type="gene designation" value="ran1"/>
</dbReference>
<dbReference type="VEuPathDB" id="FungiDB:SPBC19C2.05"/>
<dbReference type="eggNOG" id="KOG0583">
    <property type="taxonomic scope" value="Eukaryota"/>
</dbReference>
<dbReference type="HOGENOM" id="CLU_000288_172_3_1"/>
<dbReference type="InParanoid" id="P08092"/>
<dbReference type="OMA" id="ICCNACR"/>
<dbReference type="PhylomeDB" id="P08092"/>
<dbReference type="BRENDA" id="2.7.11.1">
    <property type="organism ID" value="5613"/>
</dbReference>
<dbReference type="PRO" id="PR:P08092"/>
<dbReference type="Proteomes" id="UP000002485">
    <property type="component" value="Chromosome II"/>
</dbReference>
<dbReference type="GO" id="GO:0005737">
    <property type="term" value="C:cytoplasm"/>
    <property type="evidence" value="ECO:0007005"/>
    <property type="project" value="PomBase"/>
</dbReference>
<dbReference type="GO" id="GO:0005829">
    <property type="term" value="C:cytosol"/>
    <property type="evidence" value="ECO:0007005"/>
    <property type="project" value="PomBase"/>
</dbReference>
<dbReference type="GO" id="GO:0005634">
    <property type="term" value="C:nucleus"/>
    <property type="evidence" value="ECO:0000314"/>
    <property type="project" value="PomBase"/>
</dbReference>
<dbReference type="GO" id="GO:0005524">
    <property type="term" value="F:ATP binding"/>
    <property type="evidence" value="ECO:0007669"/>
    <property type="project" value="UniProtKB-KW"/>
</dbReference>
<dbReference type="GO" id="GO:0004672">
    <property type="term" value="F:protein kinase activity"/>
    <property type="evidence" value="ECO:0000314"/>
    <property type="project" value="PomBase"/>
</dbReference>
<dbReference type="GO" id="GO:0106310">
    <property type="term" value="F:protein serine kinase activity"/>
    <property type="evidence" value="ECO:0007669"/>
    <property type="project" value="RHEA"/>
</dbReference>
<dbReference type="GO" id="GO:0004674">
    <property type="term" value="F:protein serine/threonine kinase activity"/>
    <property type="evidence" value="ECO:0000314"/>
    <property type="project" value="PomBase"/>
</dbReference>
<dbReference type="GO" id="GO:0044843">
    <property type="term" value="P:cell cycle G1/S phase transition"/>
    <property type="evidence" value="ECO:0000315"/>
    <property type="project" value="PomBase"/>
</dbReference>
<dbReference type="GO" id="GO:0000086">
    <property type="term" value="P:G2/M transition of mitotic cell cycle"/>
    <property type="evidence" value="ECO:0000318"/>
    <property type="project" value="GO_Central"/>
</dbReference>
<dbReference type="GO" id="GO:0051321">
    <property type="term" value="P:meiotic cell cycle"/>
    <property type="evidence" value="ECO:0007669"/>
    <property type="project" value="UniProtKB-KW"/>
</dbReference>
<dbReference type="GO" id="GO:0110045">
    <property type="term" value="P:negative regulation of cell cycle switching, mitotic to meiotic cell cycle"/>
    <property type="evidence" value="ECO:0000316"/>
    <property type="project" value="PomBase"/>
</dbReference>
<dbReference type="GO" id="GO:0010515">
    <property type="term" value="P:negative regulation of induction of conjugation with cellular fusion"/>
    <property type="evidence" value="ECO:0000315"/>
    <property type="project" value="PomBase"/>
</dbReference>
<dbReference type="GO" id="GO:0042308">
    <property type="term" value="P:negative regulation of protein import into nucleus"/>
    <property type="evidence" value="ECO:0000315"/>
    <property type="project" value="PomBase"/>
</dbReference>
<dbReference type="GO" id="GO:0000122">
    <property type="term" value="P:negative regulation of transcription by RNA polymerase II"/>
    <property type="evidence" value="ECO:0000315"/>
    <property type="project" value="PomBase"/>
</dbReference>
<dbReference type="GO" id="GO:1900087">
    <property type="term" value="P:positive regulation of G1/S transition of mitotic cell cycle"/>
    <property type="evidence" value="ECO:0000269"/>
    <property type="project" value="PomBase"/>
</dbReference>
<dbReference type="GO" id="GO:0010506">
    <property type="term" value="P:regulation of autophagy"/>
    <property type="evidence" value="ECO:0007669"/>
    <property type="project" value="InterPro"/>
</dbReference>
<dbReference type="GO" id="GO:0007165">
    <property type="term" value="P:signal transduction"/>
    <property type="evidence" value="ECO:0000303"/>
    <property type="project" value="PomBase"/>
</dbReference>
<dbReference type="CDD" id="cd13993">
    <property type="entry name" value="STKc_Pat1_like"/>
    <property type="match status" value="1"/>
</dbReference>
<dbReference type="Gene3D" id="1.10.510.10">
    <property type="entry name" value="Transferase(Phosphotransferase) domain 1"/>
    <property type="match status" value="1"/>
</dbReference>
<dbReference type="InterPro" id="IPR045269">
    <property type="entry name" value="Atg1-like"/>
</dbReference>
<dbReference type="InterPro" id="IPR011009">
    <property type="entry name" value="Kinase-like_dom_sf"/>
</dbReference>
<dbReference type="InterPro" id="IPR000719">
    <property type="entry name" value="Prot_kinase_dom"/>
</dbReference>
<dbReference type="InterPro" id="IPR017441">
    <property type="entry name" value="Protein_kinase_ATP_BS"/>
</dbReference>
<dbReference type="InterPro" id="IPR008271">
    <property type="entry name" value="Ser/Thr_kinase_AS"/>
</dbReference>
<dbReference type="PANTHER" id="PTHR24348">
    <property type="entry name" value="SERINE/THREONINE-PROTEIN KINASE UNC-51-RELATED"/>
    <property type="match status" value="1"/>
</dbReference>
<dbReference type="Pfam" id="PF00069">
    <property type="entry name" value="Pkinase"/>
    <property type="match status" value="1"/>
</dbReference>
<dbReference type="SMART" id="SM00220">
    <property type="entry name" value="S_TKc"/>
    <property type="match status" value="1"/>
</dbReference>
<dbReference type="SUPFAM" id="SSF56112">
    <property type="entry name" value="Protein kinase-like (PK-like)"/>
    <property type="match status" value="1"/>
</dbReference>
<dbReference type="PROSITE" id="PS00107">
    <property type="entry name" value="PROTEIN_KINASE_ATP"/>
    <property type="match status" value="1"/>
</dbReference>
<dbReference type="PROSITE" id="PS50011">
    <property type="entry name" value="PROTEIN_KINASE_DOM"/>
    <property type="match status" value="1"/>
</dbReference>
<dbReference type="PROSITE" id="PS00108">
    <property type="entry name" value="PROTEIN_KINASE_ST"/>
    <property type="match status" value="1"/>
</dbReference>
<proteinExistence type="evidence at protein level"/>
<organism>
    <name type="scientific">Schizosaccharomyces pombe (strain 972 / ATCC 24843)</name>
    <name type="common">Fission yeast</name>
    <dbReference type="NCBI Taxonomy" id="284812"/>
    <lineage>
        <taxon>Eukaryota</taxon>
        <taxon>Fungi</taxon>
        <taxon>Dikarya</taxon>
        <taxon>Ascomycota</taxon>
        <taxon>Taphrinomycotina</taxon>
        <taxon>Schizosaccharomycetes</taxon>
        <taxon>Schizosaccharomycetales</taxon>
        <taxon>Schizosaccharomycetaceae</taxon>
        <taxon>Schizosaccharomyces</taxon>
    </lineage>
</organism>
<reference key="1">
    <citation type="journal article" date="1986" name="EMBO J.">
        <title>Homology between the ran1+ gene of fission yeast and protein kinases.</title>
        <authorList>
            <person name="McLeod M."/>
            <person name="Beach D."/>
        </authorList>
    </citation>
    <scope>NUCLEOTIDE SEQUENCE [GENOMIC DNA]</scope>
</reference>
<reference key="2">
    <citation type="journal article" date="2002" name="Nature">
        <title>The genome sequence of Schizosaccharomyces pombe.</title>
        <authorList>
            <person name="Wood V."/>
            <person name="Gwilliam R."/>
            <person name="Rajandream M.A."/>
            <person name="Lyne M.H."/>
            <person name="Lyne R."/>
            <person name="Stewart A."/>
            <person name="Sgouros J.G."/>
            <person name="Peat N."/>
            <person name="Hayles J."/>
            <person name="Baker S.G."/>
            <person name="Basham D."/>
            <person name="Bowman S."/>
            <person name="Brooks K."/>
            <person name="Brown D."/>
            <person name="Brown S."/>
            <person name="Chillingworth T."/>
            <person name="Churcher C.M."/>
            <person name="Collins M."/>
            <person name="Connor R."/>
            <person name="Cronin A."/>
            <person name="Davis P."/>
            <person name="Feltwell T."/>
            <person name="Fraser A."/>
            <person name="Gentles S."/>
            <person name="Goble A."/>
            <person name="Hamlin N."/>
            <person name="Harris D.E."/>
            <person name="Hidalgo J."/>
            <person name="Hodgson G."/>
            <person name="Holroyd S."/>
            <person name="Hornsby T."/>
            <person name="Howarth S."/>
            <person name="Huckle E.J."/>
            <person name="Hunt S."/>
            <person name="Jagels K."/>
            <person name="James K.D."/>
            <person name="Jones L."/>
            <person name="Jones M."/>
            <person name="Leather S."/>
            <person name="McDonald S."/>
            <person name="McLean J."/>
            <person name="Mooney P."/>
            <person name="Moule S."/>
            <person name="Mungall K.L."/>
            <person name="Murphy L.D."/>
            <person name="Niblett D."/>
            <person name="Odell C."/>
            <person name="Oliver K."/>
            <person name="O'Neil S."/>
            <person name="Pearson D."/>
            <person name="Quail M.A."/>
            <person name="Rabbinowitsch E."/>
            <person name="Rutherford K.M."/>
            <person name="Rutter S."/>
            <person name="Saunders D."/>
            <person name="Seeger K."/>
            <person name="Sharp S."/>
            <person name="Skelton J."/>
            <person name="Simmonds M.N."/>
            <person name="Squares R."/>
            <person name="Squares S."/>
            <person name="Stevens K."/>
            <person name="Taylor K."/>
            <person name="Taylor R.G."/>
            <person name="Tivey A."/>
            <person name="Walsh S.V."/>
            <person name="Warren T."/>
            <person name="Whitehead S."/>
            <person name="Woodward J.R."/>
            <person name="Volckaert G."/>
            <person name="Aert R."/>
            <person name="Robben J."/>
            <person name="Grymonprez B."/>
            <person name="Weltjens I."/>
            <person name="Vanstreels E."/>
            <person name="Rieger M."/>
            <person name="Schaefer M."/>
            <person name="Mueller-Auer S."/>
            <person name="Gabel C."/>
            <person name="Fuchs M."/>
            <person name="Duesterhoeft A."/>
            <person name="Fritzc C."/>
            <person name="Holzer E."/>
            <person name="Moestl D."/>
            <person name="Hilbert H."/>
            <person name="Borzym K."/>
            <person name="Langer I."/>
            <person name="Beck A."/>
            <person name="Lehrach H."/>
            <person name="Reinhardt R."/>
            <person name="Pohl T.M."/>
            <person name="Eger P."/>
            <person name="Zimmermann W."/>
            <person name="Wedler H."/>
            <person name="Wambutt R."/>
            <person name="Purnelle B."/>
            <person name="Goffeau A."/>
            <person name="Cadieu E."/>
            <person name="Dreano S."/>
            <person name="Gloux S."/>
            <person name="Lelaure V."/>
            <person name="Mottier S."/>
            <person name="Galibert F."/>
            <person name="Aves S.J."/>
            <person name="Xiang Z."/>
            <person name="Hunt C."/>
            <person name="Moore K."/>
            <person name="Hurst S.M."/>
            <person name="Lucas M."/>
            <person name="Rochet M."/>
            <person name="Gaillardin C."/>
            <person name="Tallada V.A."/>
            <person name="Garzon A."/>
            <person name="Thode G."/>
            <person name="Daga R.R."/>
            <person name="Cruzado L."/>
            <person name="Jimenez J."/>
            <person name="Sanchez M."/>
            <person name="del Rey F."/>
            <person name="Benito J."/>
            <person name="Dominguez A."/>
            <person name="Revuelta J.L."/>
            <person name="Moreno S."/>
            <person name="Armstrong J."/>
            <person name="Forsburg S.L."/>
            <person name="Cerutti L."/>
            <person name="Lowe T."/>
            <person name="McCombie W.R."/>
            <person name="Paulsen I."/>
            <person name="Potashkin J."/>
            <person name="Shpakovski G.V."/>
            <person name="Ussery D."/>
            <person name="Barrell B.G."/>
            <person name="Nurse P."/>
        </authorList>
    </citation>
    <scope>NUCLEOTIDE SEQUENCE [LARGE SCALE GENOMIC DNA]</scope>
    <source>
        <strain>972 / ATCC 24843</strain>
    </source>
</reference>
<reference key="3">
    <citation type="journal article" date="2008" name="J. Proteome Res.">
        <title>Phosphoproteome analysis of fission yeast.</title>
        <authorList>
            <person name="Wilson-Grady J.T."/>
            <person name="Villen J."/>
            <person name="Gygi S.P."/>
        </authorList>
    </citation>
    <scope>PHOSPHORYLATION [LARGE SCALE ANALYSIS] AT SER-469</scope>
    <scope>IDENTIFICATION BY MASS SPECTROMETRY</scope>
</reference>
<evidence type="ECO:0000255" key="1">
    <source>
        <dbReference type="PROSITE-ProRule" id="PRU00159"/>
    </source>
</evidence>
<evidence type="ECO:0000255" key="2">
    <source>
        <dbReference type="PROSITE-ProRule" id="PRU10027"/>
    </source>
</evidence>
<evidence type="ECO:0000269" key="3">
    <source>
    </source>
</evidence>
<evidence type="ECO:0000305" key="4"/>
<protein>
    <recommendedName>
        <fullName>Negative regulator of sexual conjugation and meiosis</fullName>
        <ecNumber>2.7.11.1</ecNumber>
    </recommendedName>
</protein>